<name>CCSA_LIRTU</name>
<accession>Q0G9H0</accession>
<evidence type="ECO:0000255" key="1">
    <source>
        <dbReference type="HAMAP-Rule" id="MF_01391"/>
    </source>
</evidence>
<feature type="chain" id="PRO_0000353765" description="Cytochrome c biogenesis protein CcsA">
    <location>
        <begin position="1"/>
        <end position="321"/>
    </location>
</feature>
<feature type="transmembrane region" description="Helical" evidence="1">
    <location>
        <begin position="17"/>
        <end position="37"/>
    </location>
</feature>
<feature type="transmembrane region" description="Helical" evidence="1">
    <location>
        <begin position="43"/>
        <end position="63"/>
    </location>
</feature>
<feature type="transmembrane region" description="Helical" evidence="1">
    <location>
        <begin position="71"/>
        <end position="91"/>
    </location>
</feature>
<feature type="transmembrane region" description="Helical" evidence="1">
    <location>
        <begin position="143"/>
        <end position="163"/>
    </location>
</feature>
<feature type="transmembrane region" description="Helical" evidence="1">
    <location>
        <begin position="225"/>
        <end position="245"/>
    </location>
</feature>
<feature type="transmembrane region" description="Helical" evidence="1">
    <location>
        <begin position="258"/>
        <end position="273"/>
    </location>
</feature>
<feature type="transmembrane region" description="Helical" evidence="1">
    <location>
        <begin position="286"/>
        <end position="306"/>
    </location>
</feature>
<sequence>MIFATLEHILTHISFSIISIVITIHLVTLLVHEIVGLCDPSEKGMIAAFFCITGLLVTRWIYSRHFPLSDLYESLMFLSWSFSIIHMVPKIWNHKNDLSAITAPSAIFTQGFATSGLSTEMHQSAILVPALQSQWLMMHVSMMLLSYAALLCGSLLSVALLVITFRKNIGIVGKSNHLLIGSFSFDEIHYLNEKRNVLQNTSFLSFRNYHRYQLTQRLDYWSYRVISLGFTFLTIGILSGAVWANEAWGSYWNWDPKETWAFITWTIFAIYLHTRTNRSLQGVNSAIVASMGFLIIWICYFGVNLLGIGLHSYGSFTLTSN</sequence>
<geneLocation type="chloroplast"/>
<gene>
    <name evidence="1" type="primary">ccsA</name>
</gene>
<dbReference type="EMBL" id="DQ899947">
    <property type="protein sequence ID" value="ABI32558.1"/>
    <property type="molecule type" value="Genomic_DNA"/>
</dbReference>
<dbReference type="RefSeq" id="YP_740251.1">
    <property type="nucleotide sequence ID" value="NC_008326.1"/>
</dbReference>
<dbReference type="SMR" id="Q0G9H0"/>
<dbReference type="GeneID" id="4266683"/>
<dbReference type="GO" id="GO:0009535">
    <property type="term" value="C:chloroplast thylakoid membrane"/>
    <property type="evidence" value="ECO:0007669"/>
    <property type="project" value="UniProtKB-SubCell"/>
</dbReference>
<dbReference type="GO" id="GO:0005886">
    <property type="term" value="C:plasma membrane"/>
    <property type="evidence" value="ECO:0007669"/>
    <property type="project" value="TreeGrafter"/>
</dbReference>
<dbReference type="GO" id="GO:0020037">
    <property type="term" value="F:heme binding"/>
    <property type="evidence" value="ECO:0007669"/>
    <property type="project" value="InterPro"/>
</dbReference>
<dbReference type="GO" id="GO:0017004">
    <property type="term" value="P:cytochrome complex assembly"/>
    <property type="evidence" value="ECO:0007669"/>
    <property type="project" value="UniProtKB-UniRule"/>
</dbReference>
<dbReference type="HAMAP" id="MF_01391">
    <property type="entry name" value="CytC_CcsA"/>
    <property type="match status" value="1"/>
</dbReference>
<dbReference type="InterPro" id="IPR002541">
    <property type="entry name" value="Cyt_c_assembly"/>
</dbReference>
<dbReference type="InterPro" id="IPR017562">
    <property type="entry name" value="Cyt_c_biogenesis_CcsA"/>
</dbReference>
<dbReference type="InterPro" id="IPR045062">
    <property type="entry name" value="Cyt_c_biogenesis_CcsA/CcmC"/>
</dbReference>
<dbReference type="NCBIfam" id="TIGR03144">
    <property type="entry name" value="cytochr_II_ccsB"/>
    <property type="match status" value="1"/>
</dbReference>
<dbReference type="PANTHER" id="PTHR30071:SF1">
    <property type="entry name" value="CYTOCHROME B_B6 PROTEIN-RELATED"/>
    <property type="match status" value="1"/>
</dbReference>
<dbReference type="PANTHER" id="PTHR30071">
    <property type="entry name" value="HEME EXPORTER PROTEIN C"/>
    <property type="match status" value="1"/>
</dbReference>
<dbReference type="Pfam" id="PF01578">
    <property type="entry name" value="Cytochrom_C_asm"/>
    <property type="match status" value="1"/>
</dbReference>
<organism>
    <name type="scientific">Liriodendron tulipifera</name>
    <name type="common">Tuliptree</name>
    <name type="synonym">Tulip poplar</name>
    <dbReference type="NCBI Taxonomy" id="3415"/>
    <lineage>
        <taxon>Eukaryota</taxon>
        <taxon>Viridiplantae</taxon>
        <taxon>Streptophyta</taxon>
        <taxon>Embryophyta</taxon>
        <taxon>Tracheophyta</taxon>
        <taxon>Spermatophyta</taxon>
        <taxon>Magnoliopsida</taxon>
        <taxon>Magnoliidae</taxon>
        <taxon>Magnoliales</taxon>
        <taxon>Magnoliaceae</taxon>
        <taxon>Liriodendron</taxon>
    </lineage>
</organism>
<protein>
    <recommendedName>
        <fullName evidence="1">Cytochrome c biogenesis protein CcsA</fullName>
    </recommendedName>
</protein>
<proteinExistence type="inferred from homology"/>
<reference key="1">
    <citation type="journal article" date="2006" name="BMC Evol. Biol.">
        <title>Complete plastid genome sequences of Drimys, Liriodendron, and Piper: implications for the phylogenetic relationships of magnoliids.</title>
        <authorList>
            <person name="Cai Z."/>
            <person name="Penaflor C."/>
            <person name="Kuehl J.V."/>
            <person name="Leebens-Mack J."/>
            <person name="Carlson J.E."/>
            <person name="dePamphilis C.W."/>
            <person name="Boore J.L."/>
            <person name="Jansen R.K."/>
        </authorList>
    </citation>
    <scope>NUCLEOTIDE SEQUENCE [LARGE SCALE GENOMIC DNA]</scope>
</reference>
<keyword id="KW-0150">Chloroplast</keyword>
<keyword id="KW-0201">Cytochrome c-type biogenesis</keyword>
<keyword id="KW-0472">Membrane</keyword>
<keyword id="KW-0934">Plastid</keyword>
<keyword id="KW-0793">Thylakoid</keyword>
<keyword id="KW-0812">Transmembrane</keyword>
<keyword id="KW-1133">Transmembrane helix</keyword>
<comment type="function">
    <text evidence="1">Required during biogenesis of c-type cytochromes (cytochrome c6 and cytochrome f) at the step of heme attachment.</text>
</comment>
<comment type="subunit">
    <text evidence="1">May interact with Ccs1.</text>
</comment>
<comment type="subcellular location">
    <subcellularLocation>
        <location evidence="1">Plastid</location>
        <location evidence="1">Chloroplast thylakoid membrane</location>
        <topology evidence="1">Multi-pass membrane protein</topology>
    </subcellularLocation>
</comment>
<comment type="similarity">
    <text evidence="1">Belongs to the CcmF/CycK/Ccl1/NrfE/CcsA family.</text>
</comment>